<protein>
    <recommendedName>
        <fullName evidence="1">Chromosomal replication initiator protein DnaA</fullName>
    </recommendedName>
</protein>
<accession>Q5FN15</accession>
<dbReference type="EMBL" id="CP000033">
    <property type="protein sequence ID" value="AAV41909.1"/>
    <property type="molecule type" value="Genomic_DNA"/>
</dbReference>
<dbReference type="RefSeq" id="WP_011253999.1">
    <property type="nucleotide sequence ID" value="NC_006814.3"/>
</dbReference>
<dbReference type="RefSeq" id="YP_192940.1">
    <property type="nucleotide sequence ID" value="NC_006814.3"/>
</dbReference>
<dbReference type="SMR" id="Q5FN15"/>
<dbReference type="STRING" id="272621.LBA0001"/>
<dbReference type="GeneID" id="93290886"/>
<dbReference type="KEGG" id="lac:LBA0001"/>
<dbReference type="PATRIC" id="fig|272621.13.peg.1"/>
<dbReference type="eggNOG" id="COG0593">
    <property type="taxonomic scope" value="Bacteria"/>
</dbReference>
<dbReference type="HOGENOM" id="CLU_026910_3_1_9"/>
<dbReference type="OrthoDB" id="9807019at2"/>
<dbReference type="BioCyc" id="LACI272621:G1G49-1-MONOMER"/>
<dbReference type="Proteomes" id="UP000006381">
    <property type="component" value="Chromosome"/>
</dbReference>
<dbReference type="GO" id="GO:0005737">
    <property type="term" value="C:cytoplasm"/>
    <property type="evidence" value="ECO:0007669"/>
    <property type="project" value="UniProtKB-SubCell"/>
</dbReference>
<dbReference type="GO" id="GO:0005886">
    <property type="term" value="C:plasma membrane"/>
    <property type="evidence" value="ECO:0007669"/>
    <property type="project" value="TreeGrafter"/>
</dbReference>
<dbReference type="GO" id="GO:0005524">
    <property type="term" value="F:ATP binding"/>
    <property type="evidence" value="ECO:0007669"/>
    <property type="project" value="UniProtKB-UniRule"/>
</dbReference>
<dbReference type="GO" id="GO:0016887">
    <property type="term" value="F:ATP hydrolysis activity"/>
    <property type="evidence" value="ECO:0007669"/>
    <property type="project" value="InterPro"/>
</dbReference>
<dbReference type="GO" id="GO:0003688">
    <property type="term" value="F:DNA replication origin binding"/>
    <property type="evidence" value="ECO:0007669"/>
    <property type="project" value="UniProtKB-UniRule"/>
</dbReference>
<dbReference type="GO" id="GO:0008289">
    <property type="term" value="F:lipid binding"/>
    <property type="evidence" value="ECO:0007669"/>
    <property type="project" value="UniProtKB-KW"/>
</dbReference>
<dbReference type="GO" id="GO:0006270">
    <property type="term" value="P:DNA replication initiation"/>
    <property type="evidence" value="ECO:0007669"/>
    <property type="project" value="UniProtKB-UniRule"/>
</dbReference>
<dbReference type="GO" id="GO:0006275">
    <property type="term" value="P:regulation of DNA replication"/>
    <property type="evidence" value="ECO:0007669"/>
    <property type="project" value="UniProtKB-UniRule"/>
</dbReference>
<dbReference type="CDD" id="cd00009">
    <property type="entry name" value="AAA"/>
    <property type="match status" value="1"/>
</dbReference>
<dbReference type="CDD" id="cd06571">
    <property type="entry name" value="Bac_DnaA_C"/>
    <property type="match status" value="1"/>
</dbReference>
<dbReference type="FunFam" id="1.10.1750.10:FF:000002">
    <property type="entry name" value="Chromosomal replication initiator protein DnaA"/>
    <property type="match status" value="1"/>
</dbReference>
<dbReference type="FunFam" id="1.10.8.60:FF:000003">
    <property type="entry name" value="Chromosomal replication initiator protein DnaA"/>
    <property type="match status" value="1"/>
</dbReference>
<dbReference type="FunFam" id="3.40.50.300:FF:000668">
    <property type="entry name" value="Chromosomal replication initiator protein DnaA"/>
    <property type="match status" value="1"/>
</dbReference>
<dbReference type="Gene3D" id="1.10.1750.10">
    <property type="match status" value="1"/>
</dbReference>
<dbReference type="Gene3D" id="1.10.8.60">
    <property type="match status" value="1"/>
</dbReference>
<dbReference type="Gene3D" id="3.30.300.180">
    <property type="match status" value="1"/>
</dbReference>
<dbReference type="Gene3D" id="3.40.50.300">
    <property type="entry name" value="P-loop containing nucleotide triphosphate hydrolases"/>
    <property type="match status" value="1"/>
</dbReference>
<dbReference type="HAMAP" id="MF_00377">
    <property type="entry name" value="DnaA_bact"/>
    <property type="match status" value="1"/>
</dbReference>
<dbReference type="InterPro" id="IPR003593">
    <property type="entry name" value="AAA+_ATPase"/>
</dbReference>
<dbReference type="InterPro" id="IPR001957">
    <property type="entry name" value="Chromosome_initiator_DnaA"/>
</dbReference>
<dbReference type="InterPro" id="IPR020591">
    <property type="entry name" value="Chromosome_initiator_DnaA-like"/>
</dbReference>
<dbReference type="InterPro" id="IPR018312">
    <property type="entry name" value="Chromosome_initiator_DnaA_CS"/>
</dbReference>
<dbReference type="InterPro" id="IPR013159">
    <property type="entry name" value="DnaA_C"/>
</dbReference>
<dbReference type="InterPro" id="IPR013317">
    <property type="entry name" value="DnaA_dom"/>
</dbReference>
<dbReference type="InterPro" id="IPR038454">
    <property type="entry name" value="DnaA_N_sf"/>
</dbReference>
<dbReference type="InterPro" id="IPR027417">
    <property type="entry name" value="P-loop_NTPase"/>
</dbReference>
<dbReference type="InterPro" id="IPR010921">
    <property type="entry name" value="Trp_repressor/repl_initiator"/>
</dbReference>
<dbReference type="NCBIfam" id="TIGR00362">
    <property type="entry name" value="DnaA"/>
    <property type="match status" value="1"/>
</dbReference>
<dbReference type="PANTHER" id="PTHR30050">
    <property type="entry name" value="CHROMOSOMAL REPLICATION INITIATOR PROTEIN DNAA"/>
    <property type="match status" value="1"/>
</dbReference>
<dbReference type="PANTHER" id="PTHR30050:SF2">
    <property type="entry name" value="CHROMOSOMAL REPLICATION INITIATOR PROTEIN DNAA"/>
    <property type="match status" value="1"/>
</dbReference>
<dbReference type="Pfam" id="PF00308">
    <property type="entry name" value="Bac_DnaA"/>
    <property type="match status" value="1"/>
</dbReference>
<dbReference type="Pfam" id="PF08299">
    <property type="entry name" value="Bac_DnaA_C"/>
    <property type="match status" value="1"/>
</dbReference>
<dbReference type="PRINTS" id="PR00051">
    <property type="entry name" value="DNAA"/>
</dbReference>
<dbReference type="SMART" id="SM00382">
    <property type="entry name" value="AAA"/>
    <property type="match status" value="1"/>
</dbReference>
<dbReference type="SMART" id="SM00760">
    <property type="entry name" value="Bac_DnaA_C"/>
    <property type="match status" value="1"/>
</dbReference>
<dbReference type="SUPFAM" id="SSF52540">
    <property type="entry name" value="P-loop containing nucleoside triphosphate hydrolases"/>
    <property type="match status" value="1"/>
</dbReference>
<dbReference type="SUPFAM" id="SSF48295">
    <property type="entry name" value="TrpR-like"/>
    <property type="match status" value="1"/>
</dbReference>
<dbReference type="PROSITE" id="PS01008">
    <property type="entry name" value="DNAA"/>
    <property type="match status" value="1"/>
</dbReference>
<organism>
    <name type="scientific">Lactobacillus acidophilus (strain ATCC 700396 / NCK56 / N2 / NCFM)</name>
    <dbReference type="NCBI Taxonomy" id="272621"/>
    <lineage>
        <taxon>Bacteria</taxon>
        <taxon>Bacillati</taxon>
        <taxon>Bacillota</taxon>
        <taxon>Bacilli</taxon>
        <taxon>Lactobacillales</taxon>
        <taxon>Lactobacillaceae</taxon>
        <taxon>Lactobacillus</taxon>
    </lineage>
</organism>
<reference key="1">
    <citation type="journal article" date="2005" name="Proc. Natl. Acad. Sci. U.S.A.">
        <title>Complete genome sequence of the probiotic lactic acid bacterium Lactobacillus acidophilus NCFM.</title>
        <authorList>
            <person name="Altermann E."/>
            <person name="Russell W.M."/>
            <person name="Azcarate-Peril M.A."/>
            <person name="Barrangou R."/>
            <person name="Buck B.L."/>
            <person name="McAuliffe O."/>
            <person name="Souther N."/>
            <person name="Dobson A."/>
            <person name="Duong T."/>
            <person name="Callanan M."/>
            <person name="Lick S."/>
            <person name="Hamrick A."/>
            <person name="Cano R."/>
            <person name="Klaenhammer T.R."/>
        </authorList>
    </citation>
    <scope>NUCLEOTIDE SEQUENCE [LARGE SCALE GENOMIC DNA]</scope>
    <source>
        <strain>ATCC 700396 / NCK56 / N2 / NCFM</strain>
    </source>
</reference>
<gene>
    <name evidence="1" type="primary">dnaA</name>
    <name type="ordered locus">LBA0001</name>
</gene>
<keyword id="KW-0067">ATP-binding</keyword>
<keyword id="KW-0963">Cytoplasm</keyword>
<keyword id="KW-0235">DNA replication</keyword>
<keyword id="KW-0238">DNA-binding</keyword>
<keyword id="KW-0446">Lipid-binding</keyword>
<keyword id="KW-0547">Nucleotide-binding</keyword>
<keyword id="KW-1185">Reference proteome</keyword>
<feature type="chain" id="PRO_0000114191" description="Chromosomal replication initiator protein DnaA">
    <location>
        <begin position="1"/>
        <end position="455"/>
    </location>
</feature>
<feature type="region of interest" description="Domain I, interacts with DnaA modulators" evidence="1">
    <location>
        <begin position="1"/>
        <end position="74"/>
    </location>
</feature>
<feature type="region of interest" description="Domain II" evidence="1">
    <location>
        <begin position="74"/>
        <end position="117"/>
    </location>
</feature>
<feature type="region of interest" description="Domain III, AAA+ region" evidence="1">
    <location>
        <begin position="118"/>
        <end position="334"/>
    </location>
</feature>
<feature type="region of interest" description="Domain IV, binds dsDNA" evidence="1">
    <location>
        <begin position="335"/>
        <end position="455"/>
    </location>
</feature>
<feature type="binding site" evidence="1">
    <location>
        <position position="162"/>
    </location>
    <ligand>
        <name>ATP</name>
        <dbReference type="ChEBI" id="CHEBI:30616"/>
    </ligand>
</feature>
<feature type="binding site" evidence="1">
    <location>
        <position position="164"/>
    </location>
    <ligand>
        <name>ATP</name>
        <dbReference type="ChEBI" id="CHEBI:30616"/>
    </ligand>
</feature>
<feature type="binding site" evidence="1">
    <location>
        <position position="165"/>
    </location>
    <ligand>
        <name>ATP</name>
        <dbReference type="ChEBI" id="CHEBI:30616"/>
    </ligand>
</feature>
<feature type="binding site" evidence="1">
    <location>
        <position position="166"/>
    </location>
    <ligand>
        <name>ATP</name>
        <dbReference type="ChEBI" id="CHEBI:30616"/>
    </ligand>
</feature>
<evidence type="ECO:0000255" key="1">
    <source>
        <dbReference type="HAMAP-Rule" id="MF_00377"/>
    </source>
</evidence>
<proteinExistence type="inferred from homology"/>
<name>DNAA_LACAC</name>
<sequence>MFNFEKFWQHFNDEMRARFNEVAYNAWFKNTKPISYNQKTHELKIQVQNPVAKGYWEKNLSSQLIQSAYGYAGVELLPVFQISEDSDTPERIVTPEPQHNLQTTPTRAPQREFAKDLKLNEKYTFDNFVQGEGNKLAAGAALAVADSPGSFYNPLFIFGGVGLGKTHLMQAIGHQMLVERPNAKVVYIQSETFVNDFINSIKNKTQDKFREKYRTCDLLLVDDIQFFAKKEGIQEEFFHTFETLYNDQKQIVMTSDRLPTEIPDLSERLVSRFTWGLQVEITPPDLETRIAILRRKAEAEGLTIDDDTLDYIASQVDTNIRELEGALVKVQAYATIEKADIDINLAREALVDLKLVQKNRGLQIPKIQEVVANYFQTSTAELKGKKRVRQIVIPRQIAMYLSRELTDASLPKIGQEFGGKDHTTVMHAYDKIDKQMKTDADIKTAVFDLKQMLEH</sequence>
<comment type="function">
    <text evidence="1">Plays an essential role in the initiation and regulation of chromosomal replication. ATP-DnaA binds to the origin of replication (oriC) to initiate formation of the DNA replication initiation complex once per cell cycle. Binds the DnaA box (a 9 base pair repeat at the origin) and separates the double-stranded (ds)DNA. Forms a right-handed helical filament on oriC DNA; dsDNA binds to the exterior of the filament while single-stranded (ss)DNA is stabiized in the filament's interior. The ATP-DnaA-oriC complex binds and stabilizes one strand of the AT-rich DNA unwinding element (DUE), permitting loading of DNA polymerase. After initiation quickly degrades to an ADP-DnaA complex that is not apt for DNA replication. Binds acidic phospholipids.</text>
</comment>
<comment type="subunit">
    <text evidence="1">Oligomerizes as a right-handed, spiral filament on DNA at oriC.</text>
</comment>
<comment type="subcellular location">
    <subcellularLocation>
        <location evidence="1">Cytoplasm</location>
    </subcellularLocation>
</comment>
<comment type="domain">
    <text evidence="1">Domain I is involved in oligomerization and binding regulators, domain II is flexibile and of varying length in different bacteria, domain III forms the AAA+ region, while domain IV binds dsDNA.</text>
</comment>
<comment type="similarity">
    <text evidence="1">Belongs to the DnaA family.</text>
</comment>